<gene>
    <name type="primary">R3HDM2</name>
    <name type="synonym">KIAA1002</name>
</gene>
<evidence type="ECO:0000250" key="1">
    <source>
        <dbReference type="UniProtKB" id="Q80TM6"/>
    </source>
</evidence>
<evidence type="ECO:0000255" key="2">
    <source>
        <dbReference type="PROSITE-ProRule" id="PRU00382"/>
    </source>
</evidence>
<evidence type="ECO:0000255" key="3">
    <source>
        <dbReference type="PROSITE-ProRule" id="PRU01009"/>
    </source>
</evidence>
<evidence type="ECO:0000256" key="4">
    <source>
        <dbReference type="SAM" id="MobiDB-lite"/>
    </source>
</evidence>
<evidence type="ECO:0000303" key="5">
    <source>
    </source>
</evidence>
<evidence type="ECO:0000305" key="6"/>
<evidence type="ECO:0007744" key="7">
    <source>
    </source>
</evidence>
<evidence type="ECO:0007744" key="8">
    <source>
    </source>
</evidence>
<evidence type="ECO:0007829" key="9">
    <source>
        <dbReference type="PDB" id="1WHR"/>
    </source>
</evidence>
<dbReference type="EMBL" id="AB023219">
    <property type="protein sequence ID" value="BAA76846.2"/>
    <property type="status" value="ALT_FRAME"/>
    <property type="molecule type" value="mRNA"/>
</dbReference>
<dbReference type="EMBL" id="AC126614">
    <property type="status" value="NOT_ANNOTATED_CDS"/>
    <property type="molecule type" value="Genomic_DNA"/>
</dbReference>
<dbReference type="EMBL" id="AC137834">
    <property type="status" value="NOT_ANNOTATED_CDS"/>
    <property type="molecule type" value="Genomic_DNA"/>
</dbReference>
<dbReference type="EMBL" id="BC041857">
    <property type="protein sequence ID" value="AAH41857.1"/>
    <property type="molecule type" value="mRNA"/>
</dbReference>
<dbReference type="EMBL" id="BC104995">
    <property type="protein sequence ID" value="AAI04996.2"/>
    <property type="status" value="ALT_INIT"/>
    <property type="molecule type" value="mRNA"/>
</dbReference>
<dbReference type="EMBL" id="BC112226">
    <property type="protein sequence ID" value="AAI12227.2"/>
    <property type="status" value="ALT_INIT"/>
    <property type="molecule type" value="mRNA"/>
</dbReference>
<dbReference type="EMBL" id="BC143605">
    <property type="protein sequence ID" value="AAI43606.1"/>
    <property type="molecule type" value="mRNA"/>
</dbReference>
<dbReference type="CCDS" id="CCDS8937.2">
    <molecule id="Q9Y2K5-1"/>
</dbReference>
<dbReference type="RefSeq" id="NP_001317050.1">
    <property type="nucleotide sequence ID" value="NM_001330121.1"/>
</dbReference>
<dbReference type="RefSeq" id="NP_001317051.1">
    <property type="nucleotide sequence ID" value="NM_001330122.1"/>
</dbReference>
<dbReference type="RefSeq" id="NP_001317052.1">
    <property type="nucleotide sequence ID" value="NM_001330123.1"/>
</dbReference>
<dbReference type="RefSeq" id="NP_055740.3">
    <molecule id="Q9Y2K5-1"/>
    <property type="nucleotide sequence ID" value="NM_014925.4"/>
</dbReference>
<dbReference type="RefSeq" id="XP_016874520.1">
    <property type="nucleotide sequence ID" value="XM_017019031.1"/>
</dbReference>
<dbReference type="RefSeq" id="XP_016874521.1">
    <property type="nucleotide sequence ID" value="XM_017019032.1"/>
</dbReference>
<dbReference type="RefSeq" id="XP_016874522.1">
    <property type="nucleotide sequence ID" value="XM_017019033.1"/>
</dbReference>
<dbReference type="PDB" id="1WHR">
    <property type="method" value="NMR"/>
    <property type="chains" value="A=147-257"/>
</dbReference>
<dbReference type="PDBsum" id="1WHR"/>
<dbReference type="BMRB" id="Q9Y2K5"/>
<dbReference type="SMR" id="Q9Y2K5"/>
<dbReference type="BioGRID" id="116532">
    <property type="interactions" value="130"/>
</dbReference>
<dbReference type="FunCoup" id="Q9Y2K5">
    <property type="interactions" value="1235"/>
</dbReference>
<dbReference type="IntAct" id="Q9Y2K5">
    <property type="interactions" value="36"/>
</dbReference>
<dbReference type="STRING" id="9606.ENSP00000385169"/>
<dbReference type="GlyCosmos" id="Q9Y2K5">
    <property type="glycosylation" value="1 site, 1 glycan"/>
</dbReference>
<dbReference type="GlyGen" id="Q9Y2K5">
    <property type="glycosylation" value="3 sites, 1 O-linked glycan (2 sites)"/>
</dbReference>
<dbReference type="iPTMnet" id="Q9Y2K5"/>
<dbReference type="PhosphoSitePlus" id="Q9Y2K5"/>
<dbReference type="BioMuta" id="R3HDM2"/>
<dbReference type="DMDM" id="148887413"/>
<dbReference type="jPOST" id="Q9Y2K5"/>
<dbReference type="MassIVE" id="Q9Y2K5"/>
<dbReference type="PaxDb" id="9606-ENSP00000317903"/>
<dbReference type="PeptideAtlas" id="Q9Y2K5"/>
<dbReference type="ProteomicsDB" id="7212"/>
<dbReference type="ProteomicsDB" id="85824">
    <molecule id="Q9Y2K5-1"/>
</dbReference>
<dbReference type="ProteomicsDB" id="85825">
    <molecule id="Q9Y2K5-2"/>
</dbReference>
<dbReference type="Pumba" id="Q9Y2K5"/>
<dbReference type="Antibodypedia" id="28556">
    <property type="antibodies" value="46 antibodies from 15 providers"/>
</dbReference>
<dbReference type="DNASU" id="22864"/>
<dbReference type="Ensembl" id="ENST00000347140.7">
    <molecule id="Q9Y2K5-1"/>
    <property type="protein sequence ID" value="ENSP00000317903.6"/>
    <property type="gene ID" value="ENSG00000179912.21"/>
</dbReference>
<dbReference type="Ensembl" id="ENST00000358907.6">
    <molecule id="Q9Y2K5-1"/>
    <property type="protein sequence ID" value="ENSP00000351784.2"/>
    <property type="gene ID" value="ENSG00000179912.21"/>
</dbReference>
<dbReference type="Ensembl" id="ENST00000441731.6">
    <molecule id="Q9Y2K5-3"/>
    <property type="protein sequence ID" value="ENSP00000408536.2"/>
    <property type="gene ID" value="ENSG00000179912.21"/>
</dbReference>
<dbReference type="GeneID" id="22864"/>
<dbReference type="KEGG" id="hsa:22864"/>
<dbReference type="UCSC" id="uc001sns.3">
    <molecule id="Q9Y2K5-1"/>
    <property type="organism name" value="human"/>
</dbReference>
<dbReference type="UCSC" id="uc001snu.3">
    <property type="organism name" value="human"/>
</dbReference>
<dbReference type="AGR" id="HGNC:29167"/>
<dbReference type="CTD" id="22864"/>
<dbReference type="DisGeNET" id="22864"/>
<dbReference type="GeneCards" id="R3HDM2"/>
<dbReference type="HGNC" id="HGNC:29167">
    <property type="gene designation" value="R3HDM2"/>
</dbReference>
<dbReference type="HPA" id="ENSG00000179912">
    <property type="expression patterns" value="Low tissue specificity"/>
</dbReference>
<dbReference type="MIM" id="619886">
    <property type="type" value="gene"/>
</dbReference>
<dbReference type="neXtProt" id="NX_Q9Y2K5"/>
<dbReference type="OpenTargets" id="ENSG00000179912"/>
<dbReference type="PharmGKB" id="PA143485590"/>
<dbReference type="VEuPathDB" id="HostDB:ENSG00000179912"/>
<dbReference type="eggNOG" id="KOG2953">
    <property type="taxonomic scope" value="Eukaryota"/>
</dbReference>
<dbReference type="GeneTree" id="ENSGT00940000155609"/>
<dbReference type="InParanoid" id="Q9Y2K5"/>
<dbReference type="OrthoDB" id="278430at2759"/>
<dbReference type="PAN-GO" id="Q9Y2K5">
    <property type="GO annotations" value="0 GO annotations based on evolutionary models"/>
</dbReference>
<dbReference type="PhylomeDB" id="Q9Y2K5"/>
<dbReference type="TreeFam" id="TF315915"/>
<dbReference type="PathwayCommons" id="Q9Y2K5"/>
<dbReference type="SignaLink" id="Q9Y2K5"/>
<dbReference type="BioGRID-ORCS" id="22864">
    <property type="hits" value="19 hits in 1156 CRISPR screens"/>
</dbReference>
<dbReference type="CD-CODE" id="232F8A39">
    <property type="entry name" value="P-body"/>
</dbReference>
<dbReference type="CD-CODE" id="DEE660B4">
    <property type="entry name" value="Stress granule"/>
</dbReference>
<dbReference type="ChiTaRS" id="R3HDM2">
    <property type="organism name" value="human"/>
</dbReference>
<dbReference type="EvolutionaryTrace" id="Q9Y2K5"/>
<dbReference type="GenomeRNAi" id="22864"/>
<dbReference type="Pharos" id="Q9Y2K5">
    <property type="development level" value="Tdark"/>
</dbReference>
<dbReference type="PRO" id="PR:Q9Y2K5"/>
<dbReference type="Proteomes" id="UP000005640">
    <property type="component" value="Chromosome 12"/>
</dbReference>
<dbReference type="RNAct" id="Q9Y2K5">
    <property type="molecule type" value="protein"/>
</dbReference>
<dbReference type="Bgee" id="ENSG00000179912">
    <property type="expression patterns" value="Expressed in Brodmann (1909) area 10 and 209 other cell types or tissues"/>
</dbReference>
<dbReference type="ExpressionAtlas" id="Q9Y2K5">
    <property type="expression patterns" value="baseline and differential"/>
</dbReference>
<dbReference type="GO" id="GO:0005634">
    <property type="term" value="C:nucleus"/>
    <property type="evidence" value="ECO:0007669"/>
    <property type="project" value="UniProtKB-SubCell"/>
</dbReference>
<dbReference type="GO" id="GO:0003723">
    <property type="term" value="F:RNA binding"/>
    <property type="evidence" value="ECO:0007005"/>
    <property type="project" value="UniProtKB"/>
</dbReference>
<dbReference type="CDD" id="cd02642">
    <property type="entry name" value="R3H_encore_like"/>
    <property type="match status" value="1"/>
</dbReference>
<dbReference type="FunFam" id="3.30.1370.50:FF:000001">
    <property type="entry name" value="R3H domain-containing protein 2 isoform 1"/>
    <property type="match status" value="1"/>
</dbReference>
<dbReference type="Gene3D" id="3.30.1370.50">
    <property type="entry name" value="R3H-like domain"/>
    <property type="match status" value="1"/>
</dbReference>
<dbReference type="InterPro" id="IPR001374">
    <property type="entry name" value="R3H_dom"/>
</dbReference>
<dbReference type="InterPro" id="IPR036867">
    <property type="entry name" value="R3H_dom_sf"/>
</dbReference>
<dbReference type="InterPro" id="IPR051937">
    <property type="entry name" value="R3H_domain_containing"/>
</dbReference>
<dbReference type="InterPro" id="IPR024771">
    <property type="entry name" value="SUZ"/>
</dbReference>
<dbReference type="PANTHER" id="PTHR15672">
    <property type="entry name" value="CAMP-REGULATED PHOSPHOPROTEIN 21 RELATED R3H DOMAIN CONTAINING PROTEIN"/>
    <property type="match status" value="1"/>
</dbReference>
<dbReference type="PANTHER" id="PTHR15672:SF13">
    <property type="entry name" value="R3H DOMAIN-CONTAINING PROTEIN 2"/>
    <property type="match status" value="1"/>
</dbReference>
<dbReference type="Pfam" id="PF01424">
    <property type="entry name" value="R3H"/>
    <property type="match status" value="1"/>
</dbReference>
<dbReference type="SMART" id="SM00393">
    <property type="entry name" value="R3H"/>
    <property type="match status" value="1"/>
</dbReference>
<dbReference type="SUPFAM" id="SSF82708">
    <property type="entry name" value="R3H domain"/>
    <property type="match status" value="1"/>
</dbReference>
<dbReference type="PROSITE" id="PS51061">
    <property type="entry name" value="R3H"/>
    <property type="match status" value="1"/>
</dbReference>
<dbReference type="PROSITE" id="PS51673">
    <property type="entry name" value="SUZ"/>
    <property type="match status" value="1"/>
</dbReference>
<comment type="interaction">
    <interactant intactId="EBI-948428">
        <id>Q9Y2K5</id>
    </interactant>
    <interactant intactId="EBI-10173507">
        <id>Q6UY14-3</id>
        <label>ADAMTSL4</label>
    </interactant>
    <organismsDiffer>false</organismsDiffer>
    <experiments>3</experiments>
</comment>
<comment type="interaction">
    <interactant intactId="EBI-948428">
        <id>Q9Y2K5</id>
    </interactant>
    <interactant intactId="EBI-3867333">
        <id>A8MQ03</id>
        <label>CYSRT1</label>
    </interactant>
    <organismsDiffer>false</organismsDiffer>
    <experiments>3</experiments>
</comment>
<comment type="interaction">
    <interactant intactId="EBI-948428">
        <id>Q9Y2K5</id>
    </interactant>
    <interactant intactId="EBI-6509505">
        <id>Q0VD86</id>
        <label>INCA1</label>
    </interactant>
    <organismsDiffer>false</organismsDiffer>
    <experiments>3</experiments>
</comment>
<comment type="interaction">
    <interactant intactId="EBI-948428">
        <id>Q9Y2K5</id>
    </interactant>
    <interactant intactId="EBI-948001">
        <id>Q15323</id>
        <label>KRT31</label>
    </interactant>
    <organismsDiffer>false</organismsDiffer>
    <experiments>3</experiments>
</comment>
<comment type="interaction">
    <interactant intactId="EBI-948428">
        <id>Q9Y2K5</id>
    </interactant>
    <interactant intactId="EBI-1047093">
        <id>O76011</id>
        <label>KRT34</label>
    </interactant>
    <organismsDiffer>false</organismsDiffer>
    <experiments>3</experiments>
</comment>
<comment type="interaction">
    <interactant intactId="EBI-948428">
        <id>Q9Y2K5</id>
    </interactant>
    <interactant intactId="EBI-11959885">
        <id>Q07627</id>
        <label>KRTAP1-1</label>
    </interactant>
    <organismsDiffer>false</organismsDiffer>
    <experiments>3</experiments>
</comment>
<comment type="interaction">
    <interactant intactId="EBI-948428">
        <id>Q9Y2K5</id>
    </interactant>
    <interactant intactId="EBI-11749135">
        <id>Q8IUG1</id>
        <label>KRTAP1-3</label>
    </interactant>
    <organismsDiffer>false</organismsDiffer>
    <experiments>3</experiments>
</comment>
<comment type="interaction">
    <interactant intactId="EBI-948428">
        <id>Q9Y2K5</id>
    </interactant>
    <interactant intactId="EBI-10172290">
        <id>P60409</id>
        <label>KRTAP10-7</label>
    </interactant>
    <organismsDiffer>false</organismsDiffer>
    <experiments>3</experiments>
</comment>
<comment type="interaction">
    <interactant intactId="EBI-948428">
        <id>Q9Y2K5</id>
    </interactant>
    <interactant intactId="EBI-10171774">
        <id>P60410</id>
        <label>KRTAP10-8</label>
    </interactant>
    <organismsDiffer>false</organismsDiffer>
    <experiments>5</experiments>
</comment>
<comment type="interaction">
    <interactant intactId="EBI-948428">
        <id>Q9Y2K5</id>
    </interactant>
    <interactant intactId="EBI-11953334">
        <id>P60328</id>
        <label>KRTAP12-3</label>
    </interactant>
    <organismsDiffer>false</organismsDiffer>
    <experiments>3</experiments>
</comment>
<comment type="interaction">
    <interactant intactId="EBI-948428">
        <id>Q9Y2K5</id>
    </interactant>
    <interactant intactId="EBI-10241252">
        <id>Q3SY46</id>
        <label>KRTAP13-3</label>
    </interactant>
    <organismsDiffer>false</organismsDiffer>
    <experiments>3</experiments>
</comment>
<comment type="interaction">
    <interactant intactId="EBI-948428">
        <id>Q9Y2K5</id>
    </interactant>
    <interactant intactId="EBI-739863">
        <id>Q9BQ66</id>
        <label>KRTAP4-12</label>
    </interactant>
    <organismsDiffer>false</organismsDiffer>
    <experiments>3</experiments>
</comment>
<comment type="interaction">
    <interactant intactId="EBI-948428">
        <id>Q9Y2K5</id>
    </interactant>
    <interactant intactId="EBI-19944212">
        <id>A8MW99</id>
        <label>MEI4</label>
    </interactant>
    <organismsDiffer>false</organismsDiffer>
    <experiments>3</experiments>
</comment>
<comment type="interaction">
    <interactant intactId="EBI-948428">
        <id>Q9Y2K5</id>
    </interactant>
    <interactant intactId="EBI-22310682">
        <id>P0DPK4</id>
        <label>NOTCH2NLC</label>
    </interactant>
    <organismsDiffer>false</organismsDiffer>
    <experiments>3</experiments>
</comment>
<comment type="interaction">
    <interactant intactId="EBI-948428">
        <id>Q9Y2K5</id>
    </interactant>
    <interactant intactId="EBI-12290641">
        <id>O43610</id>
        <label>SPRY3</label>
    </interactant>
    <organismsDiffer>false</organismsDiffer>
    <experiments>3</experiments>
</comment>
<comment type="interaction">
    <interactant intactId="EBI-948428">
        <id>Q9Y2K5</id>
    </interactant>
    <interactant intactId="EBI-5235829">
        <id>Q8IWZ5</id>
        <label>TRIM42</label>
    </interactant>
    <organismsDiffer>false</organismsDiffer>
    <experiments>3</experiments>
</comment>
<comment type="interaction">
    <interactant intactId="EBI-10326419">
        <id>Q9Y2K5-2</id>
    </interactant>
    <interactant intactId="EBI-946029">
        <id>Q6P1W5</id>
        <label>C1orf94</label>
    </interactant>
    <organismsDiffer>false</organismsDiffer>
    <experiments>3</experiments>
</comment>
<comment type="interaction">
    <interactant intactId="EBI-10326419">
        <id>Q9Y2K5-2</id>
    </interactant>
    <interactant intactId="EBI-7957930">
        <id>Q92567</id>
        <label>FAM168A</label>
    </interactant>
    <organismsDiffer>false</organismsDiffer>
    <experiments>3</experiments>
</comment>
<comment type="interaction">
    <interactant intactId="EBI-10326419">
        <id>Q9Y2K5-2</id>
    </interactant>
    <interactant intactId="EBI-10171774">
        <id>P60410</id>
        <label>KRTAP10-8</label>
    </interactant>
    <organismsDiffer>false</organismsDiffer>
    <experiments>3</experiments>
</comment>
<comment type="interaction">
    <interactant intactId="EBI-10326419">
        <id>Q9Y2K5-2</id>
    </interactant>
    <interactant intactId="EBI-751260">
        <id>Q9BYR7</id>
        <label>KRTAP3-2</label>
    </interactant>
    <organismsDiffer>false</organismsDiffer>
    <experiments>3</experiments>
</comment>
<comment type="interaction">
    <interactant intactId="EBI-10326419">
        <id>Q9Y2K5-2</id>
    </interactant>
    <interactant intactId="EBI-945833">
        <id>Q7Z3S9</id>
        <label>NOTCH2NLA</label>
    </interactant>
    <organismsDiffer>false</organismsDiffer>
    <experiments>3</experiments>
</comment>
<comment type="interaction">
    <interactant intactId="EBI-10326419">
        <id>Q9Y2K5-2</id>
    </interactant>
    <interactant intactId="EBI-740322">
        <id>Q93062</id>
        <label>RBPMS</label>
    </interactant>
    <organismsDiffer>false</organismsDiffer>
    <experiments>3</experiments>
</comment>
<comment type="interaction">
    <interactant intactId="EBI-10326419">
        <id>Q9Y2K5-2</id>
    </interactant>
    <interactant intactId="EBI-307352">
        <id>Q04864</id>
        <label>REL</label>
    </interactant>
    <organismsDiffer>false</organismsDiffer>
    <experiments>3</experiments>
</comment>
<comment type="interaction">
    <interactant intactId="EBI-10326419">
        <id>Q9Y2K5-2</id>
    </interactant>
    <interactant intactId="EBI-3866665">
        <id>O43609</id>
        <label>SPRY1</label>
    </interactant>
    <organismsDiffer>false</organismsDiffer>
    <experiments>3</experiments>
</comment>
<comment type="subcellular location">
    <subcellularLocation>
        <location evidence="6">Nucleus</location>
    </subcellularLocation>
</comment>
<comment type="alternative products">
    <event type="alternative splicing"/>
    <isoform>
        <id>Q9Y2K5-1</id>
        <name>1</name>
        <sequence type="displayed"/>
    </isoform>
    <isoform>
        <id>Q9Y2K5-2</id>
        <name>2</name>
        <sequence type="described" ref="VSP_026087 VSP_026088"/>
    </isoform>
    <isoform>
        <id>Q9Y2K5-3</id>
        <name>3</name>
        <sequence type="described" ref="VSP_057391 VSP_057392"/>
    </isoform>
</comment>
<comment type="sequence caution" evidence="6">
    <conflict type="erroneous initiation">
        <sequence resource="EMBL-CDS" id="AAI04996"/>
    </conflict>
</comment>
<comment type="sequence caution" evidence="6">
    <conflict type="erroneous initiation">
        <sequence resource="EMBL-CDS" id="AAI12227"/>
    </conflict>
</comment>
<comment type="sequence caution" evidence="6">
    <conflict type="frameshift">
        <sequence resource="EMBL-CDS" id="BAA76846"/>
    </conflict>
</comment>
<sequence length="976" mass="106999">MSNSNTTQETLEIMKESEKKLVEESVNKNKFISKTPSKEEIEKECEDTSLRQETQRRTSNHGHARKRAKSNSKLKLVRSLAVCEESSTPFADGPLETQDIIQLHISCPSDKEEEKSTKDVSEKEDKDKNKEKIPRKMLSRDSSQEYTDSTGIDLHEFLVNTLKKNPRDRMMLLKLEQEILEFINDNNNQFKKFPQMTSYHRMLLHRVAAYFGMDHNVDQTGKAVIINKTSNTRIPEQRFSEHIKDEKNTEFQQRFILKRDDASMDRDDNQTGQNGYLNDIRLSKEAFSSSSHKRRQIFRGNREGLSRTSSSRQSSTDSELKSLEPRPWSSTDSDGSVRSMRPPVTKASSFSGISILTRGDSIGSSKGGSAGRISRPGMALGAPEVCNQVTSSQSVRGLLPCTAQQQQQQQQQQLPALPPTPQQQPPLNNHMISQADDLSNPFGQMSLSRQGSTEAADPSAALFQTPLISQHPQQTSFIMASTGQPLPTSNYSTSSHAPPTQQVLPPQGYMQPPQQIQVSYYPPGQYPNSNQQYRPLSHPVAYSPQRGQQLPQPSQQPGLQPMMPNQQQAAYQGMIGVQQPQNQGLLSSQRSSMGGQMQGLVVQYTPLPSYQVPVGSDSQNVVQPPFQQPMLVPVSQSVQGGLPAAGVPVYYSMIPPAQQNGTSPSVGFLQPPGSEQYQMPQSPSPCSPPQMPQQYSGVSPSGPGVVVMQLNVPNGPQPPQNPSMVQWSHCKYYSMDQRGQKPGDLYSPDSSPQANTQMSSSPVTSPTQSPAPSPVTSLSSVCTGLSPLPVLTQFPRPGGPAQGDGRYSLLGQPLQYNLSICPPLLHGQSTYTVHQGQSGLKHGNRGKRQALKSASTDLGTADVVLGRVLEVTDLPEGITRTEADKLFTQLAMSGAKIQWLKDAQGLPGGGGGDNSGTAENGRHSDLAALYTIVAVFPSPLAAQNASLRLNNSVSRFKLRMAKKNYDLRILERASSQ</sequence>
<accession>Q9Y2K5</accession>
<accession>B7ZL65</accession>
<accession>Q2M1T9</accession>
<accession>Q3ZCT5</accession>
<proteinExistence type="evidence at protein level"/>
<organism>
    <name type="scientific">Homo sapiens</name>
    <name type="common">Human</name>
    <dbReference type="NCBI Taxonomy" id="9606"/>
    <lineage>
        <taxon>Eukaryota</taxon>
        <taxon>Metazoa</taxon>
        <taxon>Chordata</taxon>
        <taxon>Craniata</taxon>
        <taxon>Vertebrata</taxon>
        <taxon>Euteleostomi</taxon>
        <taxon>Mammalia</taxon>
        <taxon>Eutheria</taxon>
        <taxon>Euarchontoglires</taxon>
        <taxon>Primates</taxon>
        <taxon>Haplorrhini</taxon>
        <taxon>Catarrhini</taxon>
        <taxon>Hominidae</taxon>
        <taxon>Homo</taxon>
    </lineage>
</organism>
<name>R3HD2_HUMAN</name>
<keyword id="KW-0002">3D-structure</keyword>
<keyword id="KW-0025">Alternative splicing</keyword>
<keyword id="KW-0539">Nucleus</keyword>
<keyword id="KW-0597">Phosphoprotein</keyword>
<keyword id="KW-1267">Proteomics identification</keyword>
<keyword id="KW-1185">Reference proteome</keyword>
<protein>
    <recommendedName>
        <fullName>R3H domain-containing protein 2</fullName>
    </recommendedName>
</protein>
<reference key="1">
    <citation type="journal article" date="1999" name="DNA Res.">
        <title>Prediction of the coding sequences of unidentified human genes. XIII. The complete sequences of 100 new cDNA clones from brain which code for large proteins in vitro.</title>
        <authorList>
            <person name="Nagase T."/>
            <person name="Ishikawa K."/>
            <person name="Suyama M."/>
            <person name="Kikuno R."/>
            <person name="Hirosawa M."/>
            <person name="Miyajima N."/>
            <person name="Tanaka A."/>
            <person name="Kotani H."/>
            <person name="Nomura N."/>
            <person name="Ohara O."/>
        </authorList>
    </citation>
    <scope>NUCLEOTIDE SEQUENCE [LARGE SCALE MRNA] (ISOFORM 1)</scope>
    <source>
        <tissue>Brain</tissue>
    </source>
</reference>
<reference key="2">
    <citation type="journal article" date="2006" name="Nature">
        <title>The finished DNA sequence of human chromosome 12.</title>
        <authorList>
            <person name="Scherer S.E."/>
            <person name="Muzny D.M."/>
            <person name="Buhay C.J."/>
            <person name="Chen R."/>
            <person name="Cree A."/>
            <person name="Ding Y."/>
            <person name="Dugan-Rocha S."/>
            <person name="Gill R."/>
            <person name="Gunaratne P."/>
            <person name="Harris R.A."/>
            <person name="Hawes A.C."/>
            <person name="Hernandez J."/>
            <person name="Hodgson A.V."/>
            <person name="Hume J."/>
            <person name="Jackson A."/>
            <person name="Khan Z.M."/>
            <person name="Kovar-Smith C."/>
            <person name="Lewis L.R."/>
            <person name="Lozado R.J."/>
            <person name="Metzker M.L."/>
            <person name="Milosavljevic A."/>
            <person name="Miner G.R."/>
            <person name="Montgomery K.T."/>
            <person name="Morgan M.B."/>
            <person name="Nazareth L.V."/>
            <person name="Scott G."/>
            <person name="Sodergren E."/>
            <person name="Song X.-Z."/>
            <person name="Steffen D."/>
            <person name="Lovering R.C."/>
            <person name="Wheeler D.A."/>
            <person name="Worley K.C."/>
            <person name="Yuan Y."/>
            <person name="Zhang Z."/>
            <person name="Adams C.Q."/>
            <person name="Ansari-Lari M.A."/>
            <person name="Ayele M."/>
            <person name="Brown M.J."/>
            <person name="Chen G."/>
            <person name="Chen Z."/>
            <person name="Clerc-Blankenburg K.P."/>
            <person name="Davis C."/>
            <person name="Delgado O."/>
            <person name="Dinh H.H."/>
            <person name="Draper H."/>
            <person name="Gonzalez-Garay M.L."/>
            <person name="Havlak P."/>
            <person name="Jackson L.R."/>
            <person name="Jacob L.S."/>
            <person name="Kelly S.H."/>
            <person name="Li L."/>
            <person name="Li Z."/>
            <person name="Liu J."/>
            <person name="Liu W."/>
            <person name="Lu J."/>
            <person name="Maheshwari M."/>
            <person name="Nguyen B.-V."/>
            <person name="Okwuonu G.O."/>
            <person name="Pasternak S."/>
            <person name="Perez L.M."/>
            <person name="Plopper F.J.H."/>
            <person name="Santibanez J."/>
            <person name="Shen H."/>
            <person name="Tabor P.E."/>
            <person name="Verduzco D."/>
            <person name="Waldron L."/>
            <person name="Wang Q."/>
            <person name="Williams G.A."/>
            <person name="Zhang J."/>
            <person name="Zhou J."/>
            <person name="Allen C.C."/>
            <person name="Amin A.G."/>
            <person name="Anyalebechi V."/>
            <person name="Bailey M."/>
            <person name="Barbaria J.A."/>
            <person name="Bimage K.E."/>
            <person name="Bryant N.P."/>
            <person name="Burch P.E."/>
            <person name="Burkett C.E."/>
            <person name="Burrell K.L."/>
            <person name="Calderon E."/>
            <person name="Cardenas V."/>
            <person name="Carter K."/>
            <person name="Casias K."/>
            <person name="Cavazos I."/>
            <person name="Cavazos S.R."/>
            <person name="Ceasar H."/>
            <person name="Chacko J."/>
            <person name="Chan S.N."/>
            <person name="Chavez D."/>
            <person name="Christopoulos C."/>
            <person name="Chu J."/>
            <person name="Cockrell R."/>
            <person name="Cox C.D."/>
            <person name="Dang M."/>
            <person name="Dathorne S.R."/>
            <person name="David R."/>
            <person name="Davis C.M."/>
            <person name="Davy-Carroll L."/>
            <person name="Deshazo D.R."/>
            <person name="Donlin J.E."/>
            <person name="D'Souza L."/>
            <person name="Eaves K.A."/>
            <person name="Egan A."/>
            <person name="Emery-Cohen A.J."/>
            <person name="Escotto M."/>
            <person name="Flagg N."/>
            <person name="Forbes L.D."/>
            <person name="Gabisi A.M."/>
            <person name="Garza M."/>
            <person name="Hamilton C."/>
            <person name="Henderson N."/>
            <person name="Hernandez O."/>
            <person name="Hines S."/>
            <person name="Hogues M.E."/>
            <person name="Huang M."/>
            <person name="Idlebird D.G."/>
            <person name="Johnson R."/>
            <person name="Jolivet A."/>
            <person name="Jones S."/>
            <person name="Kagan R."/>
            <person name="King L.M."/>
            <person name="Leal B."/>
            <person name="Lebow H."/>
            <person name="Lee S."/>
            <person name="LeVan J.M."/>
            <person name="Lewis L.C."/>
            <person name="London P."/>
            <person name="Lorensuhewa L.M."/>
            <person name="Loulseged H."/>
            <person name="Lovett D.A."/>
            <person name="Lucier A."/>
            <person name="Lucier R.L."/>
            <person name="Ma J."/>
            <person name="Madu R.C."/>
            <person name="Mapua P."/>
            <person name="Martindale A.D."/>
            <person name="Martinez E."/>
            <person name="Massey E."/>
            <person name="Mawhiney S."/>
            <person name="Meador M.G."/>
            <person name="Mendez S."/>
            <person name="Mercado C."/>
            <person name="Mercado I.C."/>
            <person name="Merritt C.E."/>
            <person name="Miner Z.L."/>
            <person name="Minja E."/>
            <person name="Mitchell T."/>
            <person name="Mohabbat F."/>
            <person name="Mohabbat K."/>
            <person name="Montgomery B."/>
            <person name="Moore N."/>
            <person name="Morris S."/>
            <person name="Munidasa M."/>
            <person name="Ngo R.N."/>
            <person name="Nguyen N.B."/>
            <person name="Nickerson E."/>
            <person name="Nwaokelemeh O.O."/>
            <person name="Nwokenkwo S."/>
            <person name="Obregon M."/>
            <person name="Oguh M."/>
            <person name="Oragunye N."/>
            <person name="Oviedo R.J."/>
            <person name="Parish B.J."/>
            <person name="Parker D.N."/>
            <person name="Parrish J."/>
            <person name="Parks K.L."/>
            <person name="Paul H.A."/>
            <person name="Payton B.A."/>
            <person name="Perez A."/>
            <person name="Perrin W."/>
            <person name="Pickens A."/>
            <person name="Primus E.L."/>
            <person name="Pu L.-L."/>
            <person name="Puazo M."/>
            <person name="Quiles M.M."/>
            <person name="Quiroz J.B."/>
            <person name="Rabata D."/>
            <person name="Reeves K."/>
            <person name="Ruiz S.J."/>
            <person name="Shao H."/>
            <person name="Sisson I."/>
            <person name="Sonaike T."/>
            <person name="Sorelle R.P."/>
            <person name="Sutton A.E."/>
            <person name="Svatek A.F."/>
            <person name="Svetz L.A."/>
            <person name="Tamerisa K.S."/>
            <person name="Taylor T.R."/>
            <person name="Teague B."/>
            <person name="Thomas N."/>
            <person name="Thorn R.D."/>
            <person name="Trejos Z.Y."/>
            <person name="Trevino B.K."/>
            <person name="Ukegbu O.N."/>
            <person name="Urban J.B."/>
            <person name="Vasquez L.I."/>
            <person name="Vera V.A."/>
            <person name="Villasana D.M."/>
            <person name="Wang L."/>
            <person name="Ward-Moore S."/>
            <person name="Warren J.T."/>
            <person name="Wei X."/>
            <person name="White F."/>
            <person name="Williamson A.L."/>
            <person name="Wleczyk R."/>
            <person name="Wooden H.S."/>
            <person name="Wooden S.H."/>
            <person name="Yen J."/>
            <person name="Yoon L."/>
            <person name="Yoon V."/>
            <person name="Zorrilla S.E."/>
            <person name="Nelson D."/>
            <person name="Kucherlapati R."/>
            <person name="Weinstock G."/>
            <person name="Gibbs R.A."/>
        </authorList>
    </citation>
    <scope>NUCLEOTIDE SEQUENCE [LARGE SCALE GENOMIC DNA]</scope>
</reference>
<reference key="3">
    <citation type="journal article" date="2004" name="Genome Res.">
        <title>The status, quality, and expansion of the NIH full-length cDNA project: the Mammalian Gene Collection (MGC).</title>
        <authorList>
            <consortium name="The MGC Project Team"/>
        </authorList>
    </citation>
    <scope>NUCLEOTIDE SEQUENCE [LARGE SCALE MRNA] (ISOFORMS 2 AND 3)</scope>
    <scope>NUCLEOTIDE SEQUENCE [LARGE SCALE MRNA] OF 321-976 (ISOFORM 1)</scope>
    <source>
        <tissue>Brain</tissue>
        <tissue>Testis</tissue>
    </source>
</reference>
<reference key="4">
    <citation type="journal article" date="2008" name="Proc. Natl. Acad. Sci. U.S.A.">
        <title>A quantitative atlas of mitotic phosphorylation.</title>
        <authorList>
            <person name="Dephoure N."/>
            <person name="Zhou C."/>
            <person name="Villen J."/>
            <person name="Beausoleil S.A."/>
            <person name="Bakalarski C.E."/>
            <person name="Elledge S.J."/>
            <person name="Gygi S.P."/>
        </authorList>
    </citation>
    <scope>IDENTIFICATION BY MASS SPECTROMETRY [LARGE SCALE ANALYSIS]</scope>
    <source>
        <tissue>Cervix carcinoma</tissue>
    </source>
</reference>
<reference key="5">
    <citation type="journal article" date="2009" name="Anal. Chem.">
        <title>Lys-N and trypsin cover complementary parts of the phosphoproteome in a refined SCX-based approach.</title>
        <authorList>
            <person name="Gauci S."/>
            <person name="Helbig A.O."/>
            <person name="Slijper M."/>
            <person name="Krijgsveld J."/>
            <person name="Heck A.J."/>
            <person name="Mohammed S."/>
        </authorList>
    </citation>
    <scope>IDENTIFICATION BY MASS SPECTROMETRY [LARGE SCALE ANALYSIS]</scope>
</reference>
<reference key="6">
    <citation type="journal article" date="2009" name="Sci. Signal.">
        <title>Quantitative phosphoproteomic analysis of T cell receptor signaling reveals system-wide modulation of protein-protein interactions.</title>
        <authorList>
            <person name="Mayya V."/>
            <person name="Lundgren D.H."/>
            <person name="Hwang S.-I."/>
            <person name="Rezaul K."/>
            <person name="Wu L."/>
            <person name="Eng J.K."/>
            <person name="Rodionov V."/>
            <person name="Han D.K."/>
        </authorList>
    </citation>
    <scope>PHOSPHORYLATION [LARGE SCALE ANALYSIS] AT SER-853</scope>
    <scope>IDENTIFICATION BY MASS SPECTROMETRY [LARGE SCALE ANALYSIS]</scope>
    <source>
        <tissue>Leukemic T-cell</tissue>
    </source>
</reference>
<reference key="7">
    <citation type="journal article" date="2010" name="Sci. Signal.">
        <title>Quantitative phosphoproteomics reveals widespread full phosphorylation site occupancy during mitosis.</title>
        <authorList>
            <person name="Olsen J.V."/>
            <person name="Vermeulen M."/>
            <person name="Santamaria A."/>
            <person name="Kumar C."/>
            <person name="Miller M.L."/>
            <person name="Jensen L.J."/>
            <person name="Gnad F."/>
            <person name="Cox J."/>
            <person name="Jensen T.S."/>
            <person name="Nigg E.A."/>
            <person name="Brunak S."/>
            <person name="Mann M."/>
        </authorList>
    </citation>
    <scope>IDENTIFICATION BY MASS SPECTROMETRY [LARGE SCALE ANALYSIS]</scope>
    <source>
        <tissue>Cervix carcinoma</tissue>
    </source>
</reference>
<reference key="8">
    <citation type="journal article" date="2013" name="J. Proteome Res.">
        <title>Toward a comprehensive characterization of a human cancer cell phosphoproteome.</title>
        <authorList>
            <person name="Zhou H."/>
            <person name="Di Palma S."/>
            <person name="Preisinger C."/>
            <person name="Peng M."/>
            <person name="Polat A.N."/>
            <person name="Heck A.J."/>
            <person name="Mohammed S."/>
        </authorList>
    </citation>
    <scope>PHOSPHORYLATION [LARGE SCALE ANALYSIS] AT SER-37; SER-330; SER-349 AND SER-855</scope>
    <scope>IDENTIFICATION BY MASS SPECTROMETRY [LARGE SCALE ANALYSIS]</scope>
    <source>
        <tissue>Cervix carcinoma</tissue>
        <tissue>Erythroleukemia</tissue>
    </source>
</reference>
<reference key="9">
    <citation type="journal article" date="2014" name="J. Proteomics">
        <title>An enzyme assisted RP-RPLC approach for in-depth analysis of human liver phosphoproteome.</title>
        <authorList>
            <person name="Bian Y."/>
            <person name="Song C."/>
            <person name="Cheng K."/>
            <person name="Dong M."/>
            <person name="Wang F."/>
            <person name="Huang J."/>
            <person name="Sun D."/>
            <person name="Wang L."/>
            <person name="Ye M."/>
            <person name="Zou H."/>
        </authorList>
    </citation>
    <scope>IDENTIFICATION BY MASS SPECTROMETRY [LARGE SCALE ANALYSIS]</scope>
    <source>
        <tissue>Liver</tissue>
    </source>
</reference>
<reference key="10">
    <citation type="submission" date="2004-11" db="EMBL/GenBank/DDBJ databases">
        <title>Solution structure of the R3H domain from human.</title>
        <authorList>
            <consortium name="RIKEN structural genomics initiative (RSGI)"/>
        </authorList>
    </citation>
    <scope>STRUCTURE BY NMR OF 147-257</scope>
</reference>
<feature type="chain" id="PRO_0000050787" description="R3H domain-containing protein 2">
    <location>
        <begin position="1"/>
        <end position="976"/>
    </location>
</feature>
<feature type="domain" description="R3H" evidence="2">
    <location>
        <begin position="169"/>
        <end position="232"/>
    </location>
</feature>
<feature type="domain" description="SUZ" evidence="3">
    <location>
        <begin position="233"/>
        <end position="310"/>
    </location>
</feature>
<feature type="region of interest" description="Disordered" evidence="4">
    <location>
        <begin position="32"/>
        <end position="71"/>
    </location>
</feature>
<feature type="region of interest" description="Disordered" evidence="4">
    <location>
        <begin position="105"/>
        <end position="147"/>
    </location>
</feature>
<feature type="region of interest" description="Disordered" evidence="4">
    <location>
        <begin position="257"/>
        <end position="376"/>
    </location>
</feature>
<feature type="region of interest" description="Disordered" evidence="4">
    <location>
        <begin position="401"/>
        <end position="457"/>
    </location>
</feature>
<feature type="region of interest" description="Disordered" evidence="4">
    <location>
        <begin position="480"/>
        <end position="560"/>
    </location>
</feature>
<feature type="region of interest" description="Disordered" evidence="4">
    <location>
        <begin position="661"/>
        <end position="725"/>
    </location>
</feature>
<feature type="region of interest" description="Disordered" evidence="4">
    <location>
        <begin position="738"/>
        <end position="780"/>
    </location>
</feature>
<feature type="compositionally biased region" description="Basic and acidic residues" evidence="4">
    <location>
        <begin position="36"/>
        <end position="56"/>
    </location>
</feature>
<feature type="compositionally biased region" description="Basic residues" evidence="4">
    <location>
        <begin position="58"/>
        <end position="71"/>
    </location>
</feature>
<feature type="compositionally biased region" description="Basic and acidic residues" evidence="4">
    <location>
        <begin position="109"/>
        <end position="143"/>
    </location>
</feature>
<feature type="compositionally biased region" description="Basic and acidic residues" evidence="4">
    <location>
        <begin position="257"/>
        <end position="269"/>
    </location>
</feature>
<feature type="compositionally biased region" description="Low complexity" evidence="4">
    <location>
        <begin position="306"/>
        <end position="317"/>
    </location>
</feature>
<feature type="compositionally biased region" description="Low complexity" evidence="4">
    <location>
        <begin position="401"/>
        <end position="415"/>
    </location>
</feature>
<feature type="compositionally biased region" description="Polar residues" evidence="4">
    <location>
        <begin position="441"/>
        <end position="453"/>
    </location>
</feature>
<feature type="compositionally biased region" description="Polar residues" evidence="4">
    <location>
        <begin position="480"/>
        <end position="504"/>
    </location>
</feature>
<feature type="compositionally biased region" description="Low complexity" evidence="4">
    <location>
        <begin position="543"/>
        <end position="560"/>
    </location>
</feature>
<feature type="compositionally biased region" description="Pro residues" evidence="4">
    <location>
        <begin position="682"/>
        <end position="691"/>
    </location>
</feature>
<feature type="compositionally biased region" description="Low complexity" evidence="4">
    <location>
        <begin position="692"/>
        <end position="714"/>
    </location>
</feature>
<feature type="compositionally biased region" description="Polar residues" evidence="4">
    <location>
        <begin position="748"/>
        <end position="758"/>
    </location>
</feature>
<feature type="compositionally biased region" description="Low complexity" evidence="4">
    <location>
        <begin position="759"/>
        <end position="777"/>
    </location>
</feature>
<feature type="modified residue" description="Phosphoserine" evidence="8">
    <location>
        <position position="37"/>
    </location>
</feature>
<feature type="modified residue" description="Phosphoserine" evidence="1">
    <location>
        <position position="143"/>
    </location>
</feature>
<feature type="modified residue" description="Phosphoserine" evidence="8">
    <location>
        <position position="330"/>
    </location>
</feature>
<feature type="modified residue" description="Phosphoserine" evidence="1">
    <location>
        <position position="333"/>
    </location>
</feature>
<feature type="modified residue" description="Phosphoserine" evidence="8">
    <location>
        <position position="349"/>
    </location>
</feature>
<feature type="modified residue" description="Phosphoserine" evidence="7">
    <location>
        <position position="853"/>
    </location>
</feature>
<feature type="modified residue" description="Phosphoserine" evidence="8">
    <location>
        <position position="855"/>
    </location>
</feature>
<feature type="modified residue" description="Phosphothreonine" evidence="1">
    <location>
        <position position="856"/>
    </location>
</feature>
<feature type="modified residue" description="Phosphothreonine" evidence="1">
    <location>
        <position position="860"/>
    </location>
</feature>
<feature type="splice variant" id="VSP_057391" description="In isoform 3." evidence="5">
    <location>
        <begin position="1"/>
        <end position="339"/>
    </location>
</feature>
<feature type="splice variant" id="VSP_026087" description="In isoform 2." evidence="5">
    <location>
        <begin position="1"/>
        <end position="295"/>
    </location>
</feature>
<feature type="splice variant" id="VSP_026088" description="In isoform 2." evidence="5">
    <original>QIF</original>
    <variation>MIT</variation>
    <location>
        <begin position="296"/>
        <end position="298"/>
    </location>
</feature>
<feature type="splice variant" id="VSP_057392" description="In isoform 3." evidence="5">
    <original>Q</original>
    <variation>QPVPALQPSPQPVQFSPSSCPQVLLPVSPPQQYNM</variation>
    <location>
        <position position="434"/>
    </location>
</feature>
<feature type="sequence variant" id="VAR_059713" description="In dbSNP:rs11832661.">
    <original>T</original>
    <variation>A</variation>
    <location>
        <position position="35"/>
    </location>
</feature>
<feature type="sequence conflict" description="In Ref. 3; AAH41857." evidence="6" ref="3">
    <original>G</original>
    <variation>S</variation>
    <location>
        <position position="359"/>
    </location>
</feature>
<feature type="helix" evidence="9">
    <location>
        <begin position="154"/>
        <end position="164"/>
    </location>
</feature>
<feature type="turn" evidence="9">
    <location>
        <begin position="166"/>
        <end position="168"/>
    </location>
</feature>
<feature type="helix" evidence="9">
    <location>
        <begin position="169"/>
        <end position="184"/>
    </location>
</feature>
<feature type="strand" evidence="9">
    <location>
        <begin position="190"/>
        <end position="192"/>
    </location>
</feature>
<feature type="helix" evidence="9">
    <location>
        <begin position="198"/>
        <end position="211"/>
    </location>
</feature>
<feature type="strand" evidence="9">
    <location>
        <begin position="215"/>
        <end position="217"/>
    </location>
</feature>
<feature type="strand" evidence="9">
    <location>
        <begin position="222"/>
        <end position="227"/>
    </location>
</feature>
<feature type="helix" evidence="9">
    <location>
        <begin position="239"/>
        <end position="241"/>
    </location>
</feature>